<comment type="function">
    <text evidence="2">It uses activated amino acids in the form of aminoacyl-tRNAs (aa-tRNAs) as substrates to catalyze the ATP-independent formation of cyclodipeptides which are intermediates in diketopiperazine (DKP) biosynthetic pathways. Catalyzes the formation of cyclo(L-Leu-L-Leu) (cLL) from L-leucyl-tRNA(Leu). Can incorporate various nonpolar residues, such as L-leucine and L-methionine, into cyclodipeptides.</text>
</comment>
<comment type="catalytic activity">
    <reaction evidence="2">
        <text>2 L-leucyl-tRNA(Leu) = cyclo(L-leucyl-L-leucyl) + 2 tRNA(Leu) + 2 H(+)</text>
        <dbReference type="Rhea" id="RHEA:46452"/>
        <dbReference type="Rhea" id="RHEA-COMP:9613"/>
        <dbReference type="Rhea" id="RHEA-COMP:9622"/>
        <dbReference type="ChEBI" id="CHEBI:15378"/>
        <dbReference type="ChEBI" id="CHEBI:67269"/>
        <dbReference type="ChEBI" id="CHEBI:78442"/>
        <dbReference type="ChEBI" id="CHEBI:78494"/>
        <dbReference type="EC" id="2.3.2.22"/>
    </reaction>
</comment>
<comment type="similarity">
    <text evidence="3">Belongs to the CDPS family.</text>
</comment>
<organism>
    <name type="scientific">Corynebacterium jeikeium (strain K411)</name>
    <dbReference type="NCBI Taxonomy" id="306537"/>
    <lineage>
        <taxon>Bacteria</taxon>
        <taxon>Bacillati</taxon>
        <taxon>Actinomycetota</taxon>
        <taxon>Actinomycetes</taxon>
        <taxon>Mycobacteriales</taxon>
        <taxon>Corynebacteriaceae</taxon>
        <taxon>Corynebacterium</taxon>
    </lineage>
</organism>
<name>CDLS_CORJK</name>
<dbReference type="EC" id="2.3.2.22"/>
<dbReference type="EMBL" id="CR931997">
    <property type="protein sequence ID" value="CAI37087.1"/>
    <property type="molecule type" value="Genomic_DNA"/>
</dbReference>
<dbReference type="RefSeq" id="WP_011273511.1">
    <property type="nucleotide sequence ID" value="NC_007164.1"/>
</dbReference>
<dbReference type="SMR" id="Q4JVS0"/>
<dbReference type="STRING" id="306537.jk0923"/>
<dbReference type="KEGG" id="cjk:jk0923"/>
<dbReference type="eggNOG" id="ENOG50332PQ">
    <property type="taxonomic scope" value="Bacteria"/>
</dbReference>
<dbReference type="HOGENOM" id="CLU_084186_1_0_11"/>
<dbReference type="OrthoDB" id="2895472at2"/>
<dbReference type="Proteomes" id="UP000000545">
    <property type="component" value="Chromosome"/>
</dbReference>
<dbReference type="GO" id="GO:0016755">
    <property type="term" value="F:aminoacyltransferase activity"/>
    <property type="evidence" value="ECO:0007669"/>
    <property type="project" value="InterPro"/>
</dbReference>
<dbReference type="Gene3D" id="3.40.50.11710">
    <property type="entry name" value="Cyclodipeptide synthase"/>
    <property type="match status" value="1"/>
</dbReference>
<dbReference type="InterPro" id="IPR030903">
    <property type="entry name" value="CDPS"/>
</dbReference>
<dbReference type="InterPro" id="IPR038622">
    <property type="entry name" value="CDPS_sf"/>
</dbReference>
<dbReference type="NCBIfam" id="TIGR04539">
    <property type="entry name" value="tRNA_cyclodipep"/>
    <property type="match status" value="1"/>
</dbReference>
<dbReference type="Pfam" id="PF16715">
    <property type="entry name" value="CDPS"/>
    <property type="match status" value="1"/>
</dbReference>
<proteinExistence type="evidence at protein level"/>
<evidence type="ECO:0000250" key="1"/>
<evidence type="ECO:0000269" key="2">
    <source>
    </source>
</evidence>
<evidence type="ECO:0000305" key="3"/>
<gene>
    <name type="ordered locus">jk0923</name>
</gene>
<keyword id="KW-1185">Reference proteome</keyword>
<keyword id="KW-0808">Transferase</keyword>
<reference key="1">
    <citation type="journal article" date="2005" name="J. Bacteriol.">
        <title>Complete genome sequence and analysis of the multiresistant nosocomial pathogen Corynebacterium jeikeium K411, a lipid-requiring bacterium of the human skin flora.</title>
        <authorList>
            <person name="Tauch A."/>
            <person name="Kaiser O."/>
            <person name="Hain T."/>
            <person name="Goesmann A."/>
            <person name="Weisshaar B."/>
            <person name="Albersmeier A."/>
            <person name="Bekel T."/>
            <person name="Bischoff N."/>
            <person name="Brune I."/>
            <person name="Chakraborty T."/>
            <person name="Kalinowski J."/>
            <person name="Meyer F."/>
            <person name="Rupp O."/>
            <person name="Schneiker S."/>
            <person name="Viehoever P."/>
            <person name="Puehler A."/>
        </authorList>
    </citation>
    <scope>NUCLEOTIDE SEQUENCE [LARGE SCALE GENOMIC DNA]</scope>
    <source>
        <strain>K411</strain>
    </source>
</reference>
<reference key="2">
    <citation type="journal article" date="2009" name="Nat. Chem. Biol.">
        <title>Cyclodipeptide synthases arec a family of tRNA-dependent peptide bond-forming enzymes.</title>
        <authorList>
            <person name="Gondry M."/>
            <person name="Sauguet L."/>
            <person name="Belin P."/>
            <person name="Thai R."/>
            <person name="Amouroux R."/>
            <person name="Tellier C."/>
            <person name="Tuphile K."/>
            <person name="Jacquet M."/>
            <person name="Braud S."/>
            <person name="Courcon M."/>
            <person name="Masson C."/>
            <person name="Dubois S."/>
            <person name="Lautru S."/>
            <person name="Lecoq A."/>
            <person name="Hashimoto S."/>
            <person name="Genet R."/>
            <person name="Pernodet J.L."/>
        </authorList>
    </citation>
    <scope>FUNCTION</scope>
    <scope>CATALYTIC ACTIVITY</scope>
    <scope>SUBSTRATE SPECIFICITY</scope>
</reference>
<accession>Q4JVS0</accession>
<protein>
    <recommendedName>
        <fullName>Cyclo(L-leucyl-L-leucyl) synthase</fullName>
        <ecNumber>2.3.2.22</ecNumber>
    </recommendedName>
    <alternativeName>
        <fullName>Cyclodileucine synthase</fullName>
    </alternativeName>
    <alternativeName>
        <fullName>Cyclodipeptide synthase</fullName>
        <shortName>CDPS</shortName>
    </alternativeName>
</protein>
<sequence length="216" mass="24549">MGESKQEHLIVGVSPFNPRFTPEWLSSAFQWGAERFNTVDVLHPGEISMSLLTSTGTPLGRAKRKVRQQCNRDMRNVEHALEISGIKLGRGKPVLISDYLQTQSYQCRRRSVIAEFQNNQIFQDACRAMSRAACQSRLRVTNVNIEPDIETAVKYIFDELPAYTHCSDLFEYETAALGYPTEWPIGKLIESGLTSLERDPNSSFIVIDFEKELIDD</sequence>
<feature type="chain" id="PRO_0000423354" description="Cyclo(L-leucyl-L-leucyl) synthase">
    <location>
        <begin position="1"/>
        <end position="216"/>
    </location>
</feature>
<feature type="active site" description="Nucleophile" evidence="1">
    <location>
        <position position="14"/>
    </location>
</feature>
<feature type="binding site" evidence="1">
    <location>
        <position position="17"/>
    </location>
    <ligand>
        <name>substrate</name>
    </ligand>
</feature>
<feature type="binding site" evidence="1">
    <location>
        <begin position="155"/>
        <end position="159"/>
    </location>
    <ligand>
        <name>substrate</name>
    </ligand>
</feature>
<feature type="binding site" evidence="1">
    <location>
        <position position="179"/>
    </location>
    <ligand>
        <name>substrate</name>
    </ligand>
</feature>
<feature type="site" description="Could have a critical role in the catalytic mechanism" evidence="1">
    <location>
        <position position="17"/>
    </location>
</feature>
<feature type="site" description="Could be involved in aa-tRNA binding" evidence="1">
    <location>
        <position position="65"/>
    </location>
</feature>
<feature type="site" description="Could be involved in aa-tRNA binding" evidence="1">
    <location>
        <position position="75"/>
    </location>
</feature>
<feature type="site" description="Could be involved in aa-tRNA binding" evidence="1">
    <location>
        <position position="155"/>
    </location>
</feature>
<feature type="site" description="Could have a critical role in the catalytic mechanism" evidence="1">
    <location>
        <position position="159"/>
    </location>
</feature>